<keyword id="KW-1185">Reference proteome</keyword>
<keyword id="KW-0687">Ribonucleoprotein</keyword>
<keyword id="KW-0689">Ribosomal protein</keyword>
<keyword id="KW-0694">RNA-binding</keyword>
<keyword id="KW-0699">rRNA-binding</keyword>
<keyword id="KW-0820">tRNA-binding</keyword>
<protein>
    <recommendedName>
        <fullName evidence="1">Small ribosomal subunit protein uS7</fullName>
    </recommendedName>
    <alternativeName>
        <fullName evidence="2">30S ribosomal protein S7</fullName>
    </alternativeName>
</protein>
<feature type="chain" id="PRO_0000241775" description="Small ribosomal subunit protein uS7">
    <location>
        <begin position="1"/>
        <end position="156"/>
    </location>
</feature>
<dbReference type="EMBL" id="CP000282">
    <property type="protein sequence ID" value="ABD80189.1"/>
    <property type="molecule type" value="Genomic_DNA"/>
</dbReference>
<dbReference type="RefSeq" id="WP_011467410.1">
    <property type="nucleotide sequence ID" value="NC_007912.1"/>
</dbReference>
<dbReference type="SMR" id="Q21M90"/>
<dbReference type="STRING" id="203122.Sde_0927"/>
<dbReference type="GeneID" id="98612613"/>
<dbReference type="KEGG" id="sde:Sde_0927"/>
<dbReference type="eggNOG" id="COG0049">
    <property type="taxonomic scope" value="Bacteria"/>
</dbReference>
<dbReference type="HOGENOM" id="CLU_072226_1_1_6"/>
<dbReference type="OrthoDB" id="9807653at2"/>
<dbReference type="Proteomes" id="UP000001947">
    <property type="component" value="Chromosome"/>
</dbReference>
<dbReference type="GO" id="GO:0015935">
    <property type="term" value="C:small ribosomal subunit"/>
    <property type="evidence" value="ECO:0007669"/>
    <property type="project" value="InterPro"/>
</dbReference>
<dbReference type="GO" id="GO:0019843">
    <property type="term" value="F:rRNA binding"/>
    <property type="evidence" value="ECO:0007669"/>
    <property type="project" value="UniProtKB-UniRule"/>
</dbReference>
<dbReference type="GO" id="GO:0003735">
    <property type="term" value="F:structural constituent of ribosome"/>
    <property type="evidence" value="ECO:0007669"/>
    <property type="project" value="InterPro"/>
</dbReference>
<dbReference type="GO" id="GO:0000049">
    <property type="term" value="F:tRNA binding"/>
    <property type="evidence" value="ECO:0007669"/>
    <property type="project" value="UniProtKB-UniRule"/>
</dbReference>
<dbReference type="GO" id="GO:0006412">
    <property type="term" value="P:translation"/>
    <property type="evidence" value="ECO:0007669"/>
    <property type="project" value="UniProtKB-UniRule"/>
</dbReference>
<dbReference type="CDD" id="cd14869">
    <property type="entry name" value="uS7_Bacteria"/>
    <property type="match status" value="1"/>
</dbReference>
<dbReference type="FunFam" id="1.10.455.10:FF:000001">
    <property type="entry name" value="30S ribosomal protein S7"/>
    <property type="match status" value="1"/>
</dbReference>
<dbReference type="Gene3D" id="1.10.455.10">
    <property type="entry name" value="Ribosomal protein S7 domain"/>
    <property type="match status" value="1"/>
</dbReference>
<dbReference type="HAMAP" id="MF_00480_B">
    <property type="entry name" value="Ribosomal_uS7_B"/>
    <property type="match status" value="1"/>
</dbReference>
<dbReference type="InterPro" id="IPR000235">
    <property type="entry name" value="Ribosomal_uS7"/>
</dbReference>
<dbReference type="InterPro" id="IPR005717">
    <property type="entry name" value="Ribosomal_uS7_bac/org-type"/>
</dbReference>
<dbReference type="InterPro" id="IPR020606">
    <property type="entry name" value="Ribosomal_uS7_CS"/>
</dbReference>
<dbReference type="InterPro" id="IPR023798">
    <property type="entry name" value="Ribosomal_uS7_dom"/>
</dbReference>
<dbReference type="InterPro" id="IPR036823">
    <property type="entry name" value="Ribosomal_uS7_dom_sf"/>
</dbReference>
<dbReference type="NCBIfam" id="TIGR01029">
    <property type="entry name" value="rpsG_bact"/>
    <property type="match status" value="1"/>
</dbReference>
<dbReference type="PANTHER" id="PTHR11205">
    <property type="entry name" value="RIBOSOMAL PROTEIN S7"/>
    <property type="match status" value="1"/>
</dbReference>
<dbReference type="Pfam" id="PF00177">
    <property type="entry name" value="Ribosomal_S7"/>
    <property type="match status" value="1"/>
</dbReference>
<dbReference type="PIRSF" id="PIRSF002122">
    <property type="entry name" value="RPS7p_RPS7a_RPS5e_RPS7o"/>
    <property type="match status" value="1"/>
</dbReference>
<dbReference type="SUPFAM" id="SSF47973">
    <property type="entry name" value="Ribosomal protein S7"/>
    <property type="match status" value="1"/>
</dbReference>
<dbReference type="PROSITE" id="PS00052">
    <property type="entry name" value="RIBOSOMAL_S7"/>
    <property type="match status" value="1"/>
</dbReference>
<sequence>MPRRRVVAKREVLPDPKFGSSTLAKFMNHVMISGKKSTAEKIVYGALDIVSEKLNKDPLETFSEALENISPLVEVKSRRVGGATYQVPVEVRPARRTALAMRWLVEYSRNRGEKSMAQRLAGELIDAAQSKGGAVKKREDVHRMAEANKAFSHFRF</sequence>
<accession>Q21M90</accession>
<proteinExistence type="inferred from homology"/>
<gene>
    <name evidence="1" type="primary">rpsG</name>
    <name type="ordered locus">Sde_0927</name>
</gene>
<organism>
    <name type="scientific">Saccharophagus degradans (strain 2-40 / ATCC 43961 / DSM 17024)</name>
    <dbReference type="NCBI Taxonomy" id="203122"/>
    <lineage>
        <taxon>Bacteria</taxon>
        <taxon>Pseudomonadati</taxon>
        <taxon>Pseudomonadota</taxon>
        <taxon>Gammaproteobacteria</taxon>
        <taxon>Cellvibrionales</taxon>
        <taxon>Cellvibrionaceae</taxon>
        <taxon>Saccharophagus</taxon>
    </lineage>
</organism>
<reference key="1">
    <citation type="journal article" date="2008" name="PLoS Genet.">
        <title>Complete genome sequence of the complex carbohydrate-degrading marine bacterium, Saccharophagus degradans strain 2-40 T.</title>
        <authorList>
            <person name="Weiner R.M."/>
            <person name="Taylor L.E. II"/>
            <person name="Henrissat B."/>
            <person name="Hauser L."/>
            <person name="Land M."/>
            <person name="Coutinho P.M."/>
            <person name="Rancurel C."/>
            <person name="Saunders E.H."/>
            <person name="Longmire A.G."/>
            <person name="Zhang H."/>
            <person name="Bayer E.A."/>
            <person name="Gilbert H.J."/>
            <person name="Larimer F."/>
            <person name="Zhulin I.B."/>
            <person name="Ekborg N.A."/>
            <person name="Lamed R."/>
            <person name="Richardson P.M."/>
            <person name="Borovok I."/>
            <person name="Hutcheson S."/>
        </authorList>
    </citation>
    <scope>NUCLEOTIDE SEQUENCE [LARGE SCALE GENOMIC DNA]</scope>
    <source>
        <strain>2-40 / ATCC 43961 / DSM 17024</strain>
    </source>
</reference>
<evidence type="ECO:0000255" key="1">
    <source>
        <dbReference type="HAMAP-Rule" id="MF_00480"/>
    </source>
</evidence>
<evidence type="ECO:0000305" key="2"/>
<comment type="function">
    <text evidence="1">One of the primary rRNA binding proteins, it binds directly to 16S rRNA where it nucleates assembly of the head domain of the 30S subunit. Is located at the subunit interface close to the decoding center, probably blocks exit of the E-site tRNA.</text>
</comment>
<comment type="subunit">
    <text evidence="1">Part of the 30S ribosomal subunit. Contacts proteins S9 and S11.</text>
</comment>
<comment type="similarity">
    <text evidence="1">Belongs to the universal ribosomal protein uS7 family.</text>
</comment>
<name>RS7_SACD2</name>